<keyword id="KW-0002">3D-structure</keyword>
<keyword id="KW-0025">Alternative splicing</keyword>
<keyword id="KW-0067">ATP-binding</keyword>
<keyword id="KW-1003">Cell membrane</keyword>
<keyword id="KW-1015">Disulfide bond</keyword>
<keyword id="KW-0325">Glycoprotein</keyword>
<keyword id="KW-0418">Kinase</keyword>
<keyword id="KW-0472">Membrane</keyword>
<keyword id="KW-0547">Nucleotide-binding</keyword>
<keyword id="KW-0597">Phosphoprotein</keyword>
<keyword id="KW-1267">Proteomics identification</keyword>
<keyword id="KW-0675">Receptor</keyword>
<keyword id="KW-1185">Reference proteome</keyword>
<keyword id="KW-0732">Signal</keyword>
<keyword id="KW-0772">Systemic lupus erythematosus</keyword>
<keyword id="KW-0808">Transferase</keyword>
<keyword id="KW-0812">Transmembrane</keyword>
<keyword id="KW-1133">Transmembrane helix</keyword>
<keyword id="KW-0829">Tyrosine-protein kinase</keyword>
<reference key="1">
    <citation type="journal article" date="1993" name="Proc. Natl. Acad. Sci. U.S.A.">
        <title>Differently spliced cDNAs of human leukocyte tyrosine kinase receptor tyrosine kinase predict receptor proteins with and without a tyrosine kinase domain and a soluble receptor protein.</title>
        <authorList>
            <person name="Toyoshima H."/>
            <person name="Kozutsumi H."/>
            <person name="Maru Y."/>
            <person name="Hagiwara K."/>
            <person name="Furaya A."/>
            <person name="Mioh H."/>
            <person name="Hanai N."/>
            <person name="Takaku F."/>
            <person name="Yazaki Y."/>
            <person name="Hirai H."/>
        </authorList>
    </citation>
    <scope>NUCLEOTIDE SEQUENCE [MRNA]</scope>
    <scope>VARIANT GLN-42</scope>
    <source>
        <tissue>Placenta</tissue>
    </source>
</reference>
<reference key="2">
    <citation type="journal article" date="1991" name="EMBO J.">
        <title>The ltk gene encodes a novel receptor-type protein tyrosine kinase.</title>
        <authorList>
            <person name="Krolewski J.J."/>
            <person name="Dalla-Favera R."/>
        </authorList>
    </citation>
    <scope>NUCLEOTIDE SEQUENCE [MRNA] (ISOFORM 2)</scope>
</reference>
<reference key="3">
    <citation type="journal article" date="2004" name="Nat. Genet.">
        <title>Complete sequencing and characterization of 21,243 full-length human cDNAs.</title>
        <authorList>
            <person name="Ota T."/>
            <person name="Suzuki Y."/>
            <person name="Nishikawa T."/>
            <person name="Otsuki T."/>
            <person name="Sugiyama T."/>
            <person name="Irie R."/>
            <person name="Wakamatsu A."/>
            <person name="Hayashi K."/>
            <person name="Sato H."/>
            <person name="Nagai K."/>
            <person name="Kimura K."/>
            <person name="Makita H."/>
            <person name="Sekine M."/>
            <person name="Obayashi M."/>
            <person name="Nishi T."/>
            <person name="Shibahara T."/>
            <person name="Tanaka T."/>
            <person name="Ishii S."/>
            <person name="Yamamoto J."/>
            <person name="Saito K."/>
            <person name="Kawai Y."/>
            <person name="Isono Y."/>
            <person name="Nakamura Y."/>
            <person name="Nagahari K."/>
            <person name="Murakami K."/>
            <person name="Yasuda T."/>
            <person name="Iwayanagi T."/>
            <person name="Wagatsuma M."/>
            <person name="Shiratori A."/>
            <person name="Sudo H."/>
            <person name="Hosoiri T."/>
            <person name="Kaku Y."/>
            <person name="Kodaira H."/>
            <person name="Kondo H."/>
            <person name="Sugawara M."/>
            <person name="Takahashi M."/>
            <person name="Kanda K."/>
            <person name="Yokoi T."/>
            <person name="Furuya T."/>
            <person name="Kikkawa E."/>
            <person name="Omura Y."/>
            <person name="Abe K."/>
            <person name="Kamihara K."/>
            <person name="Katsuta N."/>
            <person name="Sato K."/>
            <person name="Tanikawa M."/>
            <person name="Yamazaki M."/>
            <person name="Ninomiya K."/>
            <person name="Ishibashi T."/>
            <person name="Yamashita H."/>
            <person name="Murakawa K."/>
            <person name="Fujimori K."/>
            <person name="Tanai H."/>
            <person name="Kimata M."/>
            <person name="Watanabe M."/>
            <person name="Hiraoka S."/>
            <person name="Chiba Y."/>
            <person name="Ishida S."/>
            <person name="Ono Y."/>
            <person name="Takiguchi S."/>
            <person name="Watanabe S."/>
            <person name="Yosida M."/>
            <person name="Hotuta T."/>
            <person name="Kusano J."/>
            <person name="Kanehori K."/>
            <person name="Takahashi-Fujii A."/>
            <person name="Hara H."/>
            <person name="Tanase T.-O."/>
            <person name="Nomura Y."/>
            <person name="Togiya S."/>
            <person name="Komai F."/>
            <person name="Hara R."/>
            <person name="Takeuchi K."/>
            <person name="Arita M."/>
            <person name="Imose N."/>
            <person name="Musashino K."/>
            <person name="Yuuki H."/>
            <person name="Oshima A."/>
            <person name="Sasaki N."/>
            <person name="Aotsuka S."/>
            <person name="Yoshikawa Y."/>
            <person name="Matsunawa H."/>
            <person name="Ichihara T."/>
            <person name="Shiohata N."/>
            <person name="Sano S."/>
            <person name="Moriya S."/>
            <person name="Momiyama H."/>
            <person name="Satoh N."/>
            <person name="Takami S."/>
            <person name="Terashima Y."/>
            <person name="Suzuki O."/>
            <person name="Nakagawa S."/>
            <person name="Senoh A."/>
            <person name="Mizoguchi H."/>
            <person name="Goto Y."/>
            <person name="Shimizu F."/>
            <person name="Wakebe H."/>
            <person name="Hishigaki H."/>
            <person name="Watanabe T."/>
            <person name="Sugiyama A."/>
            <person name="Takemoto M."/>
            <person name="Kawakami B."/>
            <person name="Yamazaki M."/>
            <person name="Watanabe K."/>
            <person name="Kumagai A."/>
            <person name="Itakura S."/>
            <person name="Fukuzumi Y."/>
            <person name="Fujimori Y."/>
            <person name="Komiyama M."/>
            <person name="Tashiro H."/>
            <person name="Tanigami A."/>
            <person name="Fujiwara T."/>
            <person name="Ono T."/>
            <person name="Yamada K."/>
            <person name="Fujii Y."/>
            <person name="Ozaki K."/>
            <person name="Hirao M."/>
            <person name="Ohmori Y."/>
            <person name="Kawabata A."/>
            <person name="Hikiji T."/>
            <person name="Kobatake N."/>
            <person name="Inagaki H."/>
            <person name="Ikema Y."/>
            <person name="Okamoto S."/>
            <person name="Okitani R."/>
            <person name="Kawakami T."/>
            <person name="Noguchi S."/>
            <person name="Itoh T."/>
            <person name="Shigeta K."/>
            <person name="Senba T."/>
            <person name="Matsumura K."/>
            <person name="Nakajima Y."/>
            <person name="Mizuno T."/>
            <person name="Morinaga M."/>
            <person name="Sasaki M."/>
            <person name="Togashi T."/>
            <person name="Oyama M."/>
            <person name="Hata H."/>
            <person name="Watanabe M."/>
            <person name="Komatsu T."/>
            <person name="Mizushima-Sugano J."/>
            <person name="Satoh T."/>
            <person name="Shirai Y."/>
            <person name="Takahashi Y."/>
            <person name="Nakagawa K."/>
            <person name="Okumura K."/>
            <person name="Nagase T."/>
            <person name="Nomura N."/>
            <person name="Kikuchi H."/>
            <person name="Masuho Y."/>
            <person name="Yamashita R."/>
            <person name="Nakai K."/>
            <person name="Yada T."/>
            <person name="Nakamura Y."/>
            <person name="Ohara O."/>
            <person name="Isogai T."/>
            <person name="Sugano S."/>
        </authorList>
    </citation>
    <scope>NUCLEOTIDE SEQUENCE [LARGE SCALE MRNA] (ISOFORM 5)</scope>
    <source>
        <tissue>Tongue</tissue>
    </source>
</reference>
<reference key="4">
    <citation type="journal article" date="2006" name="Nature">
        <title>Analysis of the DNA sequence and duplication history of human chromosome 15.</title>
        <authorList>
            <person name="Zody M.C."/>
            <person name="Garber M."/>
            <person name="Sharpe T."/>
            <person name="Young S.K."/>
            <person name="Rowen L."/>
            <person name="O'Neill K."/>
            <person name="Whittaker C.A."/>
            <person name="Kamal M."/>
            <person name="Chang J.L."/>
            <person name="Cuomo C.A."/>
            <person name="Dewar K."/>
            <person name="FitzGerald M.G."/>
            <person name="Kodira C.D."/>
            <person name="Madan A."/>
            <person name="Qin S."/>
            <person name="Yang X."/>
            <person name="Abbasi N."/>
            <person name="Abouelleil A."/>
            <person name="Arachchi H.M."/>
            <person name="Baradarani L."/>
            <person name="Birditt B."/>
            <person name="Bloom S."/>
            <person name="Bloom T."/>
            <person name="Borowsky M.L."/>
            <person name="Burke J."/>
            <person name="Butler J."/>
            <person name="Cook A."/>
            <person name="DeArellano K."/>
            <person name="DeCaprio D."/>
            <person name="Dorris L. III"/>
            <person name="Dors M."/>
            <person name="Eichler E.E."/>
            <person name="Engels R."/>
            <person name="Fahey J."/>
            <person name="Fleetwood P."/>
            <person name="Friedman C."/>
            <person name="Gearin G."/>
            <person name="Hall J.L."/>
            <person name="Hensley G."/>
            <person name="Johnson E."/>
            <person name="Jones C."/>
            <person name="Kamat A."/>
            <person name="Kaur A."/>
            <person name="Locke D.P."/>
            <person name="Madan A."/>
            <person name="Munson G."/>
            <person name="Jaffe D.B."/>
            <person name="Lui A."/>
            <person name="Macdonald P."/>
            <person name="Mauceli E."/>
            <person name="Naylor J.W."/>
            <person name="Nesbitt R."/>
            <person name="Nicol R."/>
            <person name="O'Leary S.B."/>
            <person name="Ratcliffe A."/>
            <person name="Rounsley S."/>
            <person name="She X."/>
            <person name="Sneddon K.M.B."/>
            <person name="Stewart S."/>
            <person name="Sougnez C."/>
            <person name="Stone S.M."/>
            <person name="Topham K."/>
            <person name="Vincent D."/>
            <person name="Wang S."/>
            <person name="Zimmer A.R."/>
            <person name="Birren B.W."/>
            <person name="Hood L."/>
            <person name="Lander E.S."/>
            <person name="Nusbaum C."/>
        </authorList>
    </citation>
    <scope>NUCLEOTIDE SEQUENCE [LARGE SCALE GENOMIC DNA]</scope>
</reference>
<reference key="5">
    <citation type="submission" date="2005-07" db="EMBL/GenBank/DDBJ databases">
        <authorList>
            <person name="Mural R.J."/>
            <person name="Istrail S."/>
            <person name="Sutton G.G."/>
            <person name="Florea L."/>
            <person name="Halpern A.L."/>
            <person name="Mobarry C.M."/>
            <person name="Lippert R."/>
            <person name="Walenz B."/>
            <person name="Shatkay H."/>
            <person name="Dew I."/>
            <person name="Miller J.R."/>
            <person name="Flanigan M.J."/>
            <person name="Edwards N.J."/>
            <person name="Bolanos R."/>
            <person name="Fasulo D."/>
            <person name="Halldorsson B.V."/>
            <person name="Hannenhalli S."/>
            <person name="Turner R."/>
            <person name="Yooseph S."/>
            <person name="Lu F."/>
            <person name="Nusskern D.R."/>
            <person name="Shue B.C."/>
            <person name="Zheng X.H."/>
            <person name="Zhong F."/>
            <person name="Delcher A.L."/>
            <person name="Huson D.H."/>
            <person name="Kravitz S.A."/>
            <person name="Mouchard L."/>
            <person name="Reinert K."/>
            <person name="Remington K.A."/>
            <person name="Clark A.G."/>
            <person name="Waterman M.S."/>
            <person name="Eichler E.E."/>
            <person name="Adams M.D."/>
            <person name="Hunkapiller M.W."/>
            <person name="Myers E.W."/>
            <person name="Venter J.C."/>
        </authorList>
    </citation>
    <scope>NUCLEOTIDE SEQUENCE [LARGE SCALE GENOMIC DNA]</scope>
</reference>
<reference key="6">
    <citation type="journal article" date="1990" name="Oncogene Res.">
        <title>Human ltk: gene structure and preferential expression in human leukemic cells.</title>
        <authorList>
            <person name="Maru Y."/>
            <person name="Hirai H."/>
            <person name="Takaku F."/>
        </authorList>
    </citation>
    <scope>NUCLEOTIDE SEQUENCE [MRNA] OF 416-864</scope>
</reference>
<reference key="7">
    <citation type="journal article" date="1990" name="Oncogene">
        <title>Identification and chromosomal mapping of new human tyrosine kinase genes.</title>
        <authorList>
            <person name="Krolewski J.J."/>
            <person name="Lee R."/>
            <person name="Eddy R."/>
            <person name="Shows T.B."/>
            <person name="Dalla-Favera R."/>
        </authorList>
    </citation>
    <scope>NUCLEOTIDE SEQUENCE [MRNA] OF 608-716</scope>
    <scope>TISSUE SPECIFICITY</scope>
</reference>
<reference key="8">
    <citation type="journal article" date="1994" name="Oncogene">
        <title>Human ltk receptor tyrosine kinase binds to PLC-gamma 1, PI3-K, GAP and Raf-1 in vivo.</title>
        <authorList>
            <person name="Kozutsumi H."/>
            <person name="Toyoshima H."/>
            <person name="Hagiwara K."/>
            <person name="Yazaki Y."/>
            <person name="Hirai H."/>
        </authorList>
    </citation>
    <scope>PHOSPHORYLATION</scope>
    <scope>MUTAGENESIS OF LYS-544</scope>
</reference>
<reference key="9">
    <citation type="journal article" date="1997" name="Oncogene">
        <title>The phosphatidylinositol 3' kinase pathway is required for the survival signal of leukocyte tyrosine kinase.</title>
        <authorList>
            <person name="Ueno H."/>
            <person name="Honda H."/>
            <person name="Nakamoto T."/>
            <person name="Yamagata T."/>
            <person name="Sasaki K."/>
            <person name="Miyagawa K."/>
            <person name="Mitani K."/>
            <person name="Yazaki Y."/>
            <person name="Hirai H."/>
        </authorList>
    </citation>
    <scope>POSSIBLE FUNCTION</scope>
    <scope>MUTAGENESIS OF TYR-753 AND TYR-862</scope>
</reference>
<reference key="10">
    <citation type="journal article" date="1999" name="Oncogene">
        <title>Heart-specific activation of LTK results in cardiac hypertrophy, cardiomyocyte degeneration and gene reprogramming in transgenic mice.</title>
        <authorList>
            <person name="Honda H."/>
            <person name="Harada K."/>
            <person name="Komuro I."/>
            <person name="Terasaki F."/>
            <person name="Ueno H."/>
            <person name="Tanaka Y."/>
            <person name="Kawamura K."/>
            <person name="Yazaki Y."/>
            <person name="Hirai H."/>
        </authorList>
    </citation>
    <scope>FUNCTION</scope>
    <scope>CATALYTIC ACTIVITY</scope>
</reference>
<reference key="11">
    <citation type="journal article" date="2004" name="Hum. Mol. Genet.">
        <title>Gain-of-function polymorphism in mouse and human Ltk: implications for the pathogenesis of systemic lupus erythematosus.</title>
        <authorList>
            <person name="Li N."/>
            <person name="Nakamura K."/>
            <person name="Jiang Y."/>
            <person name="Tsurui H."/>
            <person name="Matsuoka S."/>
            <person name="Abe M."/>
            <person name="Ohtsuji M."/>
            <person name="Nishimura H."/>
            <person name="Kato K."/>
            <person name="Kawai T."/>
            <person name="Atsumi T."/>
            <person name="Koike T."/>
            <person name="Shirai T."/>
            <person name="Ueno H."/>
            <person name="Hirose S."/>
        </authorList>
    </citation>
    <scope>POSSIBLE INVOLVEMENT IN SUSCEPTIBILITY TO SYSTEMIC LUPUS ERYTHEMATOSUS</scope>
    <scope>VARIANT LYS-763</scope>
    <scope>CHARACTERIZATION OF VARIANT LYS-763</scope>
    <scope>AUTOPHOSPHORYLATION</scope>
    <scope>MUTAGENESIS OF GLY-750</scope>
</reference>
<reference key="12">
    <citation type="journal article" date="2008" name="NeuroReport">
        <title>Expression of a chimeric CSF1R-LTK mediates ligand-dependent neurite outgrowth.</title>
        <authorList>
            <person name="Yamada S."/>
            <person name="Nomura T."/>
            <person name="Takano K."/>
            <person name="Fujita S."/>
            <person name="Miyake M."/>
            <person name="Miyake J."/>
        </authorList>
    </citation>
    <scope>POSSIBLE FUNCTION</scope>
</reference>
<reference key="13">
    <citation type="journal article" date="2009" name="J. Biol. Chem.">
        <title>Cytoplasmic ACK1 interaction with multiple receptor tyrosine kinases is mediated by Grb2: an analysis of ACK1 effects on Axl signaling.</title>
        <authorList>
            <person name="Pao-Chun L."/>
            <person name="Chan P.M."/>
            <person name="Chan W."/>
            <person name="Manser E."/>
        </authorList>
    </citation>
    <scope>INTERACTION WITH GRB2 AND TNK2</scope>
</reference>
<reference key="14">
    <citation type="journal article" date="2010" name="J. Cell Biol.">
        <title>MAPK signaling to the early secretory pathway revealed by kinase/phosphatase functional screening.</title>
        <authorList>
            <person name="Farhan H."/>
            <person name="Wendeler M.W."/>
            <person name="Mitrovic S."/>
            <person name="Fava E."/>
            <person name="Silberberg Y."/>
            <person name="Sharan R."/>
            <person name="Zerial M."/>
            <person name="Hauri H.P."/>
        </authorList>
    </citation>
    <scope>FUNCTION IN REGULATION OF THE SECRETORY PATHWAY</scope>
</reference>
<reference key="15">
    <citation type="journal article" date="2018" name="Proc. Natl. Acad. Sci. U.S.A.">
        <title>Identification of a biologically active fragment of ALK and LTK-Ligand 2 (augmentor-alpha).</title>
        <authorList>
            <person name="Reshetnyak A.V."/>
            <person name="Mohanty J."/>
            <person name="Tome F."/>
            <person name="Puleo D.E."/>
            <person name="Plotnikov A.N."/>
            <person name="Ahmed M."/>
            <person name="Kaur N."/>
            <person name="Poliakov A."/>
            <person name="Cinnaiyan A.M."/>
            <person name="Lax I."/>
            <person name="Schlessinger J."/>
        </authorList>
    </citation>
    <scope>FUNCTION</scope>
    <scope>CATALYTIC ACTIVITY</scope>
</reference>
<reference key="16">
    <citation type="journal article" date="2021" name="Nature">
        <title>Structural basis of cytokine-mediated activation of ALK family receptors.</title>
        <authorList>
            <person name="De Munck S."/>
            <person name="Provost M."/>
            <person name="Kurikawa M."/>
            <person name="Omori I."/>
            <person name="Mukohyama J."/>
            <person name="Felix J."/>
            <person name="Bloch Y."/>
            <person name="Abdel-Wahab O."/>
            <person name="Bazan J.F."/>
            <person name="Yoshimi A."/>
            <person name="Savvides S.N."/>
        </authorList>
    </citation>
    <scope>X-RAY CRYSTALLOGRAPHY (1.30 ANGSTROMS) OF 63-378 IN COMPLEX WITH ALKAL1</scope>
    <scope>FUNCTION</scope>
    <scope>SUBCELLULAR LOCATION</scope>
    <scope>SUBUNIT</scope>
    <scope>MUTAGENESIS OF ARG-241</scope>
</reference>
<reference key="17">
    <citation type="journal article" date="2007" name="Nature">
        <title>Patterns of somatic mutation in human cancer genomes.</title>
        <authorList>
            <person name="Greenman C."/>
            <person name="Stephens P."/>
            <person name="Smith R."/>
            <person name="Dalgliesh G.L."/>
            <person name="Hunter C."/>
            <person name="Bignell G."/>
            <person name="Davies H."/>
            <person name="Teague J."/>
            <person name="Butler A."/>
            <person name="Stevens C."/>
            <person name="Edkins S."/>
            <person name="O'Meara S."/>
            <person name="Vastrik I."/>
            <person name="Schmidt E.E."/>
            <person name="Avis T."/>
            <person name="Barthorpe S."/>
            <person name="Bhamra G."/>
            <person name="Buck G."/>
            <person name="Choudhury B."/>
            <person name="Clements J."/>
            <person name="Cole J."/>
            <person name="Dicks E."/>
            <person name="Forbes S."/>
            <person name="Gray K."/>
            <person name="Halliday K."/>
            <person name="Harrison R."/>
            <person name="Hills K."/>
            <person name="Hinton J."/>
            <person name="Jenkinson A."/>
            <person name="Jones D."/>
            <person name="Menzies A."/>
            <person name="Mironenko T."/>
            <person name="Perry J."/>
            <person name="Raine K."/>
            <person name="Richardson D."/>
            <person name="Shepherd R."/>
            <person name="Small A."/>
            <person name="Tofts C."/>
            <person name="Varian J."/>
            <person name="Webb T."/>
            <person name="West S."/>
            <person name="Widaa S."/>
            <person name="Yates A."/>
            <person name="Cahill D.P."/>
            <person name="Louis D.N."/>
            <person name="Goldstraw P."/>
            <person name="Nicholson A.G."/>
            <person name="Brasseur F."/>
            <person name="Looijenga L."/>
            <person name="Weber B.L."/>
            <person name="Chiew Y.-E."/>
            <person name="DeFazio A."/>
            <person name="Greaves M.F."/>
            <person name="Green A.R."/>
            <person name="Campbell P."/>
            <person name="Birney E."/>
            <person name="Easton D.F."/>
            <person name="Chenevix-Trench G."/>
            <person name="Tan M.-H."/>
            <person name="Khoo S.K."/>
            <person name="Teh B.T."/>
            <person name="Yuen S.T."/>
            <person name="Leung S.Y."/>
            <person name="Wooster R."/>
            <person name="Futreal P.A."/>
            <person name="Stratton M.R."/>
        </authorList>
    </citation>
    <scope>VARIANTS [LARGE SCALE ANALYSIS] GLN-42; ARG-384; ASN-535; SER-569; GLN-673; SER-745 AND SER-838</scope>
</reference>
<sequence length="864" mass="91681">MGCWGQLLVWFGAAGAILCSSPGSQETFLRSSPLPLASPSPRDPKVSAPPSILEPASPLNSPGTEGSWLFSTCGASGRHGPTQTQCDGAYAGTSVVVTVGAAGQLRGVQLWRVPGPGQYLISAYGAAGGKGAKNHLSRAHGVFVSAIFSLGLGESLYILVGQQGEDACPGGSPESQLVCLGESRAVEEHAAMDGSEGVPGSRRWAGGGGGGGGATYVFRVRAGELEPLLVAAGGGGRAYLRPRDRGRTQASPEKLENRSEAPGSGGRGGAAGGGGGWTSRAPSPQAGRSLQEGAEGGQGCSEAWATLGWAAAGGFGGGGGACTAGGGGGGYRGGDASETDNLWADGEDGVSFIHPSSELFLQPLAVTENHGEVEIRRHLNCSHCPLRDCQWQAELQLAECLCPEGMELAVDNVTCMDLHKPPGPLVLMVAVVATSTLSLLMVCGVLILVKQKKWQGLQEMRLPSPELELSKLRTSAIRTAPNPYYCQVGLGPAQSWPLPPGVTEVSPANVTLLRALGHGAFGEVYEGLVIGLPGDSSPLQVAIKTLPELCSPQDELDFLMEALIISKFRHQNIVRCVGLSLRATPRLILLELMSGGDMKSFLRHSRPHLGQPSPLVMRDLLQLAQDIAQGCHYLEENHFIHRDIAARNCLLSCAGPSRVAKIGDFGMARDIYRASYYRRGDRALLPVKWMPPEAFLEGIFTSKTDSWSFGVLLWEIFSLGYMPYPGRTNQEVLDFVVGGGRMDPPRGCPGPVYRIMTQCWQHEPELRPSFASILERLQYCTQDPDVLNSLLPMELGPTPEEEGTSGLGNRSLECLRPPQPQELSPEKLKSWGGSPLGPWLSSGLKPLKSRGLQPQNLWNPTYRS</sequence>
<feature type="signal peptide" evidence="3">
    <location>
        <begin position="1"/>
        <end position="16"/>
    </location>
</feature>
<feature type="chain" id="PRO_0000016738" description="Leukocyte tyrosine kinase receptor">
    <location>
        <begin position="17"/>
        <end position="864"/>
    </location>
</feature>
<feature type="topological domain" description="Extracellular" evidence="3">
    <location>
        <begin position="17"/>
        <end position="424"/>
    </location>
</feature>
<feature type="transmembrane region" description="Helical" evidence="3">
    <location>
        <begin position="425"/>
        <end position="449"/>
    </location>
</feature>
<feature type="topological domain" description="Cytoplasmic" evidence="3">
    <location>
        <begin position="450"/>
        <end position="864"/>
    </location>
</feature>
<feature type="domain" description="Protein kinase" evidence="4">
    <location>
        <begin position="510"/>
        <end position="786"/>
    </location>
</feature>
<feature type="region of interest" description="Disordered" evidence="6">
    <location>
        <begin position="30"/>
        <end position="64"/>
    </location>
</feature>
<feature type="region of interest" description="Disordered" evidence="6">
    <location>
        <begin position="239"/>
        <end position="297"/>
    </location>
</feature>
<feature type="region of interest" description="Disordered" evidence="6">
    <location>
        <begin position="790"/>
        <end position="830"/>
    </location>
</feature>
<feature type="region of interest" description="Disordered" evidence="6">
    <location>
        <begin position="842"/>
        <end position="864"/>
    </location>
</feature>
<feature type="compositionally biased region" description="Low complexity" evidence="6">
    <location>
        <begin position="30"/>
        <end position="40"/>
    </location>
</feature>
<feature type="compositionally biased region" description="Basic and acidic residues" evidence="6">
    <location>
        <begin position="241"/>
        <end position="259"/>
    </location>
</feature>
<feature type="compositionally biased region" description="Gly residues" evidence="6">
    <location>
        <begin position="263"/>
        <end position="277"/>
    </location>
</feature>
<feature type="compositionally biased region" description="Polar residues" evidence="6">
    <location>
        <begin position="852"/>
        <end position="864"/>
    </location>
</feature>
<feature type="active site" description="Proton acceptor" evidence="4 5">
    <location>
        <position position="643"/>
    </location>
</feature>
<feature type="binding site" evidence="4">
    <location>
        <begin position="516"/>
        <end position="524"/>
    </location>
    <ligand>
        <name>ATP</name>
        <dbReference type="ChEBI" id="CHEBI:30616"/>
    </ligand>
</feature>
<feature type="binding site" evidence="4">
    <location>
        <position position="544"/>
    </location>
    <ligand>
        <name>ATP</name>
        <dbReference type="ChEBI" id="CHEBI:30616"/>
    </ligand>
</feature>
<feature type="modified residue" description="Phosphotyrosine; by autocatalysis" evidence="1">
    <location>
        <position position="676"/>
    </location>
</feature>
<feature type="glycosylation site" description="N-linked (GlcNAc...) asparagine" evidence="3">
    <location>
        <position position="257"/>
    </location>
</feature>
<feature type="glycosylation site" description="N-linked (GlcNAc...) asparagine" evidence="3">
    <location>
        <position position="380"/>
    </location>
</feature>
<feature type="glycosylation site" description="N-linked (GlcNAc...) asparagine" evidence="3">
    <location>
        <position position="412"/>
    </location>
</feature>
<feature type="disulfide bond" evidence="15 23">
    <location>
        <begin position="73"/>
        <end position="86"/>
    </location>
</feature>
<feature type="disulfide bond" evidence="15 23">
    <location>
        <begin position="168"/>
        <end position="179"/>
    </location>
</feature>
<feature type="disulfide bond" evidence="15 23">
    <location>
        <begin position="300"/>
        <end position="322"/>
    </location>
</feature>
<feature type="splice variant" id="VSP_002946" description="In isoform Lambda P1." evidence="21">
    <original>G</original>
    <variation>VAAASGDGAAPAPGARAAWGPGERAFLGAGSPAQRGEAPGPRRFPPPLPAG</variation>
    <location>
        <position position="170"/>
    </location>
</feature>
<feature type="splice variant" id="VSP_002947" description="In isoform Lambda P1." evidence="21">
    <location>
        <begin position="171"/>
        <end position="864"/>
    </location>
</feature>
<feature type="splice variant" id="VSP_035109" description="In isoform 2 and isoform 5." evidence="19 20">
    <location>
        <begin position="274"/>
        <end position="334"/>
    </location>
</feature>
<feature type="splice variant" id="VSP_002948" description="In isoform Lambda P3." evidence="21">
    <original>L</original>
    <variation>GTKRLAGTVDSRLLLSSELGWVSAAGSRRQ</variation>
    <location>
        <position position="448"/>
    </location>
</feature>
<feature type="splice variant" id="VSP_002949" description="In isoform Lambda P3." evidence="21">
    <location>
        <begin position="449"/>
        <end position="864"/>
    </location>
</feature>
<feature type="splice variant" id="VSP_044521" description="In isoform 5." evidence="19">
    <original>VKQKKWQGLQEMRLPSPELELSKLRTSAIRTAPNPYYCQVGLGPAQSWPLPPGVTEVSPANVTLLRALGHGAFGEVYEGLVIGLPGDSSPLQVAIK</original>
    <variation>GGAWPGPVLASATRCHRGFPSQCYSAQ</variation>
    <location>
        <begin position="449"/>
        <end position="544"/>
    </location>
</feature>
<feature type="sequence variant" id="VAR_031569" description="In dbSNP:rs2305030." evidence="9 16">
    <original>R</original>
    <variation>Q</variation>
    <location>
        <position position="42"/>
    </location>
</feature>
<feature type="sequence variant" id="VAR_046106" description="In dbSNP:rs55683312." evidence="9">
    <original>C</original>
    <variation>R</variation>
    <location>
        <position position="384"/>
    </location>
</feature>
<feature type="sequence variant" id="VAR_046107" description="In dbSNP:rs35932273." evidence="9">
    <original>D</original>
    <variation>N</variation>
    <location>
        <position position="535"/>
    </location>
</feature>
<feature type="sequence variant" id="VAR_046108" description="In dbSNP:rs148513655." evidence="9">
    <original>R</original>
    <variation>S</variation>
    <location>
        <position position="569"/>
    </location>
</feature>
<feature type="sequence variant" id="VAR_046109" description="In dbSNP:rs55876255." evidence="9">
    <original>R</original>
    <variation>Q</variation>
    <location>
        <position position="673"/>
    </location>
</feature>
<feature type="sequence variant" id="VAR_046110" description="In dbSNP:rs55900837." evidence="9">
    <original>P</original>
    <variation>S</variation>
    <location>
        <position position="745"/>
    </location>
</feature>
<feature type="sequence variant" id="VAR_065465" description="May possibly contribute to susceptibility to systemic lupus erythematosus; increases autophosphorylation and interaction with PI3-kinase subunit p85; dbSNP:rs76282169." evidence="8">
    <original>E</original>
    <variation>K</variation>
    <location>
        <position position="763"/>
    </location>
</feature>
<feature type="sequence variant" id="VAR_046111" description="In dbSNP:rs56367146." evidence="9">
    <original>P</original>
    <variation>S</variation>
    <location>
        <position position="838"/>
    </location>
</feature>
<feature type="mutagenesis site" description="Abolished homodimerization following interaction with ALKAL1." evidence="15">
    <original>R</original>
    <variation>A</variation>
    <location>
        <position position="241"/>
    </location>
</feature>
<feature type="mutagenesis site" description="Loss of interaction with PLCG1, PI3-kinase subunit p85, Ras GTPase-activating protein and RAF1." evidence="17">
    <original>K</original>
    <variation>M</variation>
    <location>
        <position position="544"/>
    </location>
</feature>
<feature type="mutagenesis site" description="Increases autophosphorylation and interaction with PI3-kinase subunit p85 (demonstrated with chimeric EGFR-LTK)." evidence="8">
    <original>G</original>
    <variation>E</variation>
    <location>
        <position position="750"/>
    </location>
</feature>
<feature type="mutagenesis site" description="Abolishes interaction with PI3-kinase subunit p85, impairs PI3 kinase activity and leads to apoptosis (demonstrated with chimeric EGFR-LTK)." evidence="18">
    <original>Y</original>
    <variation>F</variation>
    <location>
        <position position="753"/>
    </location>
</feature>
<feature type="mutagenesis site" description="Impairs phosphorylation of CBLC (demonstrated with chimeric EGFR-LTK)." evidence="18">
    <original>Y</original>
    <variation>F</variation>
    <location>
        <position position="862"/>
    </location>
</feature>
<feature type="sequence conflict" description="In Ref. 3; BAG59451." evidence="21" ref="3">
    <original>R</original>
    <variation>G</variation>
    <location>
        <position position="106"/>
    </location>
</feature>
<feature type="sequence conflict" description="In Ref. 2; CAA43113." evidence="21" ref="2">
    <original>V</original>
    <variation>L</variation>
    <location>
        <position position="220"/>
    </location>
</feature>
<feature type="sequence conflict" description="In Ref. 6; CAA36460." evidence="21" ref="6">
    <original>V</original>
    <variation>GTKRLAGTVDSRLLLSM</variation>
    <location>
        <position position="449"/>
    </location>
</feature>
<feature type="sequence conflict" description="In Ref. 6; CAA36460." evidence="21" ref="6">
    <original>SCA</original>
    <variation>MR</variation>
    <location>
        <begin position="652"/>
        <end position="654"/>
    </location>
</feature>
<feature type="strand" evidence="25">
    <location>
        <begin position="67"/>
        <end position="70"/>
    </location>
</feature>
<feature type="strand" evidence="24">
    <location>
        <begin position="77"/>
        <end position="79"/>
    </location>
</feature>
<feature type="helix" evidence="25">
    <location>
        <begin position="83"/>
        <end position="90"/>
    </location>
</feature>
<feature type="strand" evidence="25">
    <location>
        <begin position="98"/>
        <end position="100"/>
    </location>
</feature>
<feature type="helix" evidence="25">
    <location>
        <begin position="103"/>
        <end position="105"/>
    </location>
</feature>
<feature type="strand" evidence="25">
    <location>
        <begin position="109"/>
        <end position="112"/>
    </location>
</feature>
<feature type="strand" evidence="25">
    <location>
        <begin position="115"/>
        <end position="124"/>
    </location>
</feature>
<feature type="strand" evidence="25">
    <location>
        <begin position="141"/>
        <end position="150"/>
    </location>
</feature>
<feature type="strand" evidence="25">
    <location>
        <begin position="155"/>
        <end position="159"/>
    </location>
</feature>
<feature type="strand" evidence="25">
    <location>
        <begin position="167"/>
        <end position="169"/>
    </location>
</feature>
<feature type="helix" evidence="25">
    <location>
        <begin position="173"/>
        <end position="179"/>
    </location>
</feature>
<feature type="helix" evidence="24">
    <location>
        <begin position="185"/>
        <end position="189"/>
    </location>
</feature>
<feature type="strand" evidence="25">
    <location>
        <begin position="215"/>
        <end position="221"/>
    </location>
</feature>
<feature type="strand" evidence="25">
    <location>
        <begin position="224"/>
        <end position="231"/>
    </location>
</feature>
<feature type="strand" evidence="25">
    <location>
        <begin position="269"/>
        <end position="271"/>
    </location>
</feature>
<feature type="helix" evidence="25">
    <location>
        <begin position="290"/>
        <end position="292"/>
    </location>
</feature>
<feature type="helix" evidence="25">
    <location>
        <begin position="301"/>
        <end position="307"/>
    </location>
</feature>
<feature type="turn" evidence="25">
    <location>
        <begin position="315"/>
        <end position="317"/>
    </location>
</feature>
<feature type="strand" evidence="25">
    <location>
        <begin position="322"/>
        <end position="324"/>
    </location>
</feature>
<feature type="strand" evidence="25">
    <location>
        <begin position="330"/>
        <end position="332"/>
    </location>
</feature>
<feature type="strand" evidence="24">
    <location>
        <begin position="350"/>
        <end position="353"/>
    </location>
</feature>
<feature type="strand" evidence="25">
    <location>
        <begin position="357"/>
        <end position="359"/>
    </location>
</feature>
<feature type="strand" evidence="25">
    <location>
        <begin position="364"/>
        <end position="367"/>
    </location>
</feature>
<feature type="strand" evidence="25">
    <location>
        <begin position="372"/>
        <end position="377"/>
    </location>
</feature>
<evidence type="ECO:0000250" key="1"/>
<evidence type="ECO:0000250" key="2">
    <source>
        <dbReference type="UniProtKB" id="Q9UM73"/>
    </source>
</evidence>
<evidence type="ECO:0000255" key="3"/>
<evidence type="ECO:0000255" key="4">
    <source>
        <dbReference type="PROSITE-ProRule" id="PRU00159"/>
    </source>
</evidence>
<evidence type="ECO:0000255" key="5">
    <source>
        <dbReference type="PROSITE-ProRule" id="PRU10028"/>
    </source>
</evidence>
<evidence type="ECO:0000256" key="6">
    <source>
        <dbReference type="SAM" id="MobiDB-lite"/>
    </source>
</evidence>
<evidence type="ECO:0000269" key="7">
    <source>
    </source>
</evidence>
<evidence type="ECO:0000269" key="8">
    <source>
    </source>
</evidence>
<evidence type="ECO:0000269" key="9">
    <source>
    </source>
</evidence>
<evidence type="ECO:0000269" key="10">
    <source>
    </source>
</evidence>
<evidence type="ECO:0000269" key="11">
    <source>
    </source>
</evidence>
<evidence type="ECO:0000269" key="12">
    <source>
    </source>
</evidence>
<evidence type="ECO:0000269" key="13">
    <source>
    </source>
</evidence>
<evidence type="ECO:0000269" key="14">
    <source>
    </source>
</evidence>
<evidence type="ECO:0000269" key="15">
    <source>
    </source>
</evidence>
<evidence type="ECO:0000269" key="16">
    <source>
    </source>
</evidence>
<evidence type="ECO:0000269" key="17">
    <source>
    </source>
</evidence>
<evidence type="ECO:0000269" key="18">
    <source>
    </source>
</evidence>
<evidence type="ECO:0000303" key="19">
    <source>
    </source>
</evidence>
<evidence type="ECO:0000303" key="20">
    <source>
    </source>
</evidence>
<evidence type="ECO:0000305" key="21"/>
<evidence type="ECO:0000312" key="22">
    <source>
        <dbReference type="HGNC" id="HGNC:6721"/>
    </source>
</evidence>
<evidence type="ECO:0007744" key="23">
    <source>
        <dbReference type="PDB" id="7NX0"/>
    </source>
</evidence>
<evidence type="ECO:0007829" key="24">
    <source>
        <dbReference type="PDB" id="7NX0"/>
    </source>
</evidence>
<evidence type="ECO:0007829" key="25">
    <source>
        <dbReference type="PDB" id="7NX1"/>
    </source>
</evidence>
<name>LTK_HUMAN</name>
<accession>P29376</accession>
<accession>A6NNJ8</accession>
<accession>B4DL89</accession>
<accession>E9PFX4</accession>
<gene>
    <name evidence="20 22" type="primary">LTK</name>
    <name type="synonym">TYK1</name>
</gene>
<proteinExistence type="evidence at protein level"/>
<comment type="function">
    <text evidence="2 7 10 12 14 15 18">Receptor with a tyrosine-protein kinase activity (PubMed:10445845, PubMed:20548102, PubMed:30061385). Following activation by ALKAL1 or ALKAL2 ligands at the cell surface, transduces an extracellular signal into an intracellular response (PubMed:30061385, PubMed:34646012). Ligand-binding to the extracellular domain induces tyrosine kinase activation, leading to activation of the mitogen-activated protein kinase (MAPK) pathway (PubMed:20548102). Phosphorylates almost exclusively at the first tyrosine of the Y-x-x-x-Y-Y motif (By similarity). The exact function of this protein is not known; studies with chimeric proteins demonstrate its ability to promote growth and specifically neurite outgrowth, and cell survival (PubMed:18849880, PubMed:9223670). Involved in regulation of the secretory pathway involving endoplasmic reticulum (ER) export sites (ERESs) and ER to Golgi transport (PubMed:20548102).</text>
</comment>
<comment type="catalytic activity">
    <reaction evidence="5 7 14">
        <text>L-tyrosyl-[protein] + ATP = O-phospho-L-tyrosyl-[protein] + ADP + H(+)</text>
        <dbReference type="Rhea" id="RHEA:10596"/>
        <dbReference type="Rhea" id="RHEA-COMP:10136"/>
        <dbReference type="Rhea" id="RHEA-COMP:20101"/>
        <dbReference type="ChEBI" id="CHEBI:15378"/>
        <dbReference type="ChEBI" id="CHEBI:30616"/>
        <dbReference type="ChEBI" id="CHEBI:46858"/>
        <dbReference type="ChEBI" id="CHEBI:61978"/>
        <dbReference type="ChEBI" id="CHEBI:456216"/>
        <dbReference type="EC" id="2.7.10.1"/>
    </reaction>
</comment>
<comment type="activity regulation">
    <text evidence="2">Activated by ligand-binding, leading to homodimerization and autophosphorylation.</text>
</comment>
<comment type="subunit">
    <text evidence="11 15">Homodimer; homodimerizes following ligand-binding (PubMed:34646012). Part of a complex including LTK, TNK2 and GRB2, in which GRB2 promotes LTK recruitment by TNK2 (PubMed:19815557).</text>
</comment>
<comment type="interaction">
    <interactant intactId="EBI-6596163">
        <id>P29376</id>
    </interactant>
    <interactant intactId="EBI-11691642">
        <id>Q6UXT8</id>
        <label>ALKAL1</label>
    </interactant>
    <organismsDiffer>false</organismsDiffer>
    <experiments>3</experiments>
</comment>
<comment type="interaction">
    <interactant intactId="EBI-6596163">
        <id>P29376</id>
    </interactant>
    <interactant intactId="EBI-702104">
        <id>P29317</id>
        <label>EPHA2</label>
    </interactant>
    <organismsDiffer>false</organismsDiffer>
    <experiments>3</experiments>
</comment>
<comment type="interaction">
    <interactant intactId="EBI-6596163">
        <id>P29376</id>
    </interactant>
    <interactant intactId="EBI-79464">
        <id>P27986</id>
        <label>PIK3R1</label>
    </interactant>
    <organismsDiffer>false</organismsDiffer>
    <experiments>3</experiments>
</comment>
<comment type="subcellular location">
    <subcellularLocation>
        <location evidence="15">Cell membrane</location>
        <topology evidence="3">Single-pass type I membrane protein</topology>
    </subcellularLocation>
</comment>
<comment type="alternative products">
    <event type="alternative splicing"/>
    <isoform>
        <id>P29376-1</id>
        <name>Lambda P2</name>
        <sequence type="displayed"/>
    </isoform>
    <isoform>
        <id>P29376-2</id>
        <name>Lambda P1</name>
        <sequence type="described" ref="VSP_002946 VSP_002947"/>
    </isoform>
    <isoform>
        <id>P29376-3</id>
        <name>Lambda P3</name>
        <sequence type="described" ref="VSP_002948 VSP_002949"/>
    </isoform>
    <isoform>
        <id>P29376-4</id>
        <name>2</name>
        <sequence type="described" ref="VSP_035109"/>
    </isoform>
    <isoform>
        <id>P29376-5</id>
        <name>5</name>
        <sequence type="described" ref="VSP_035109 VSP_044521"/>
    </isoform>
    <text>Additional isoforms seem to exist.</text>
</comment>
<comment type="tissue specificity">
    <text evidence="13">Expressed in non-hematopoietic cell lines and T- and B-cell lines.</text>
</comment>
<comment type="PTM">
    <text evidence="8">Phosphorylated at tyrosine residues by autocatalysis, which activates kinase activity.</text>
</comment>
<comment type="disease">
    <text evidence="8">Genetic variations in LTK that cause up-regulation of the PI3K pathway may possibly contribute to susceptibility to abnormal proliferation of self-reactive B-cells and, therefore, to systemic lupus erythematosus (SLE) (PubMed:14695357). SLE is a chronic, inflammatory and often febrile multisystemic disorder of connective tissue, thought to represent a failure of the regulatory mechanisms of the autoimmune system (PubMed:14695357).</text>
</comment>
<comment type="similarity">
    <text evidence="4">Belongs to the protein kinase superfamily. Tyr protein kinase family. Insulin receptor subfamily.</text>
</comment>
<protein>
    <recommendedName>
        <fullName evidence="20">Leukocyte tyrosine kinase receptor</fullName>
        <ecNumber evidence="5 7 14">2.7.10.1</ecNumber>
    </recommendedName>
    <alternativeName>
        <fullName>Protein tyrosine kinase 1</fullName>
    </alternativeName>
</protein>
<organism>
    <name type="scientific">Homo sapiens</name>
    <name type="common">Human</name>
    <dbReference type="NCBI Taxonomy" id="9606"/>
    <lineage>
        <taxon>Eukaryota</taxon>
        <taxon>Metazoa</taxon>
        <taxon>Chordata</taxon>
        <taxon>Craniata</taxon>
        <taxon>Vertebrata</taxon>
        <taxon>Euteleostomi</taxon>
        <taxon>Mammalia</taxon>
        <taxon>Eutheria</taxon>
        <taxon>Euarchontoglires</taxon>
        <taxon>Primates</taxon>
        <taxon>Haplorrhini</taxon>
        <taxon>Catarrhini</taxon>
        <taxon>Hominidae</taxon>
        <taxon>Homo</taxon>
    </lineage>
</organism>
<dbReference type="EC" id="2.7.10.1" evidence="5 7 14"/>
<dbReference type="EMBL" id="D16105">
    <property type="protein sequence ID" value="BAA03679.1"/>
    <property type="molecule type" value="mRNA"/>
</dbReference>
<dbReference type="EMBL" id="X60702">
    <property type="protein sequence ID" value="CAA43113.1"/>
    <property type="molecule type" value="mRNA"/>
</dbReference>
<dbReference type="EMBL" id="AK296892">
    <property type="protein sequence ID" value="BAG59451.1"/>
    <property type="molecule type" value="mRNA"/>
</dbReference>
<dbReference type="EMBL" id="AC016134">
    <property type="status" value="NOT_ANNOTATED_CDS"/>
    <property type="molecule type" value="Genomic_DNA"/>
</dbReference>
<dbReference type="EMBL" id="AC087721">
    <property type="status" value="NOT_ANNOTATED_CDS"/>
    <property type="molecule type" value="Genomic_DNA"/>
</dbReference>
<dbReference type="EMBL" id="CH471125">
    <property type="protein sequence ID" value="EAW92496.1"/>
    <property type="molecule type" value="Genomic_DNA"/>
</dbReference>
<dbReference type="EMBL" id="X52213">
    <property type="protein sequence ID" value="CAA36460.1"/>
    <property type="molecule type" value="mRNA"/>
</dbReference>
<dbReference type="CCDS" id="CCDS10077.1">
    <molecule id="P29376-1"/>
</dbReference>
<dbReference type="CCDS" id="CCDS10078.1">
    <molecule id="P29376-4"/>
</dbReference>
<dbReference type="CCDS" id="CCDS45237.1">
    <molecule id="P29376-5"/>
</dbReference>
<dbReference type="PIR" id="A48266">
    <property type="entry name" value="A48266"/>
</dbReference>
<dbReference type="RefSeq" id="NP_001129157.1">
    <molecule id="P29376-5"/>
    <property type="nucleotide sequence ID" value="NM_001135685.2"/>
</dbReference>
<dbReference type="RefSeq" id="NP_002335.2">
    <molecule id="P29376-1"/>
    <property type="nucleotide sequence ID" value="NM_002344.5"/>
</dbReference>
<dbReference type="RefSeq" id="NP_996844.1">
    <molecule id="P29376-4"/>
    <property type="nucleotide sequence ID" value="NM_206961.4"/>
</dbReference>
<dbReference type="PDB" id="7NX0">
    <property type="method" value="X-ray"/>
    <property type="resolution" value="1.95 A"/>
    <property type="chains" value="B/C=63-378"/>
</dbReference>
<dbReference type="PDB" id="7NX1">
    <property type="method" value="X-ray"/>
    <property type="resolution" value="1.30 A"/>
    <property type="chains" value="A=63-378"/>
</dbReference>
<dbReference type="PDBsum" id="7NX0"/>
<dbReference type="PDBsum" id="7NX1"/>
<dbReference type="SMR" id="P29376"/>
<dbReference type="BioGRID" id="110236">
    <property type="interactions" value="151"/>
</dbReference>
<dbReference type="CORUM" id="P29376"/>
<dbReference type="FunCoup" id="P29376">
    <property type="interactions" value="48"/>
</dbReference>
<dbReference type="IntAct" id="P29376">
    <property type="interactions" value="142"/>
</dbReference>
<dbReference type="MINT" id="P29376"/>
<dbReference type="STRING" id="9606.ENSP00000263800"/>
<dbReference type="BindingDB" id="P29376"/>
<dbReference type="ChEMBL" id="CHEMBL5627"/>
<dbReference type="DrugBank" id="DB12010">
    <property type="generic name" value="Fostamatinib"/>
</dbReference>
<dbReference type="DrugCentral" id="P29376"/>
<dbReference type="GuidetoPHARMACOLOGY" id="1838"/>
<dbReference type="GlyCosmos" id="P29376">
    <property type="glycosylation" value="3 sites, No reported glycans"/>
</dbReference>
<dbReference type="GlyGen" id="P29376">
    <property type="glycosylation" value="4 sites, 1 N-linked glycan (1 site)"/>
</dbReference>
<dbReference type="iPTMnet" id="P29376"/>
<dbReference type="PhosphoSitePlus" id="P29376"/>
<dbReference type="BioMuta" id="LTK"/>
<dbReference type="DMDM" id="143811416"/>
<dbReference type="jPOST" id="P29376"/>
<dbReference type="MassIVE" id="P29376"/>
<dbReference type="PaxDb" id="9606-ENSP00000263800"/>
<dbReference type="PeptideAtlas" id="P29376"/>
<dbReference type="ProteomicsDB" id="20198"/>
<dbReference type="ProteomicsDB" id="54561">
    <molecule id="P29376-1"/>
</dbReference>
<dbReference type="ProteomicsDB" id="54563">
    <molecule id="P29376-3"/>
</dbReference>
<dbReference type="ProteomicsDB" id="54564">
    <molecule id="P29376-4"/>
</dbReference>
<dbReference type="Antibodypedia" id="23318">
    <property type="antibodies" value="300 antibodies from 32 providers"/>
</dbReference>
<dbReference type="DNASU" id="4058"/>
<dbReference type="Ensembl" id="ENST00000263800.11">
    <molecule id="P29376-1"/>
    <property type="protein sequence ID" value="ENSP00000263800.6"/>
    <property type="gene ID" value="ENSG00000062524.16"/>
</dbReference>
<dbReference type="Ensembl" id="ENST00000355166.9">
    <molecule id="P29376-4"/>
    <property type="protein sequence ID" value="ENSP00000347293.5"/>
    <property type="gene ID" value="ENSG00000062524.16"/>
</dbReference>
<dbReference type="Ensembl" id="ENST00000453182.2">
    <molecule id="P29376-5"/>
    <property type="protein sequence ID" value="ENSP00000392196.2"/>
    <property type="gene ID" value="ENSG00000062524.16"/>
</dbReference>
<dbReference type="GeneID" id="4058"/>
<dbReference type="KEGG" id="hsa:4058"/>
<dbReference type="MANE-Select" id="ENST00000263800.11">
    <property type="protein sequence ID" value="ENSP00000263800.6"/>
    <property type="RefSeq nucleotide sequence ID" value="NM_002344.6"/>
    <property type="RefSeq protein sequence ID" value="NP_002335.2"/>
</dbReference>
<dbReference type="UCSC" id="uc001zoa.4">
    <molecule id="P29376-1"/>
    <property type="organism name" value="human"/>
</dbReference>
<dbReference type="AGR" id="HGNC:6721"/>
<dbReference type="CTD" id="4058"/>
<dbReference type="DisGeNET" id="4058"/>
<dbReference type="GeneCards" id="LTK"/>
<dbReference type="HGNC" id="HGNC:6721">
    <property type="gene designation" value="LTK"/>
</dbReference>
<dbReference type="HPA" id="ENSG00000062524">
    <property type="expression patterns" value="Tissue enhanced (intestine, lung, salivary gland)"/>
</dbReference>
<dbReference type="MalaCards" id="LTK"/>
<dbReference type="MIM" id="151520">
    <property type="type" value="gene"/>
</dbReference>
<dbReference type="neXtProt" id="NX_P29376"/>
<dbReference type="OpenTargets" id="ENSG00000062524"/>
<dbReference type="PharmGKB" id="PA30483"/>
<dbReference type="VEuPathDB" id="HostDB:ENSG00000062524"/>
<dbReference type="eggNOG" id="KOG1095">
    <property type="taxonomic scope" value="Eukaryota"/>
</dbReference>
<dbReference type="GeneTree" id="ENSGT00940000162680"/>
<dbReference type="InParanoid" id="P29376"/>
<dbReference type="OMA" id="WPFGLPE"/>
<dbReference type="OrthoDB" id="65481at2759"/>
<dbReference type="PAN-GO" id="P29376">
    <property type="GO annotations" value="8 GO annotations based on evolutionary models"/>
</dbReference>
<dbReference type="PhylomeDB" id="P29376"/>
<dbReference type="TreeFam" id="TF351636"/>
<dbReference type="BRENDA" id="2.7.10.1">
    <property type="organism ID" value="2681"/>
</dbReference>
<dbReference type="PathwayCommons" id="P29376"/>
<dbReference type="Reactome" id="R-HSA-9842663">
    <property type="pathway name" value="Signaling by LTK"/>
</dbReference>
<dbReference type="SignaLink" id="P29376"/>
<dbReference type="SIGNOR" id="P29376"/>
<dbReference type="BioGRID-ORCS" id="4058">
    <property type="hits" value="9 hits in 1185 CRISPR screens"/>
</dbReference>
<dbReference type="GeneWiki" id="Leukocyte_receptor_tyrosine_kinase"/>
<dbReference type="GenomeRNAi" id="4058"/>
<dbReference type="Pharos" id="P29376">
    <property type="development level" value="Tclin"/>
</dbReference>
<dbReference type="PRO" id="PR:P29376"/>
<dbReference type="Proteomes" id="UP000005640">
    <property type="component" value="Chromosome 15"/>
</dbReference>
<dbReference type="RNAct" id="P29376">
    <property type="molecule type" value="protein"/>
</dbReference>
<dbReference type="Bgee" id="ENSG00000062524">
    <property type="expression patterns" value="Expressed in mucosa of transverse colon and 114 other cell types or tissues"/>
</dbReference>
<dbReference type="ExpressionAtlas" id="P29376">
    <property type="expression patterns" value="baseline and differential"/>
</dbReference>
<dbReference type="GO" id="GO:0016020">
    <property type="term" value="C:membrane"/>
    <property type="evidence" value="ECO:0000314"/>
    <property type="project" value="UniProtKB"/>
</dbReference>
<dbReference type="GO" id="GO:0005886">
    <property type="term" value="C:plasma membrane"/>
    <property type="evidence" value="ECO:0000314"/>
    <property type="project" value="UniProt"/>
</dbReference>
<dbReference type="GO" id="GO:0043235">
    <property type="term" value="C:receptor complex"/>
    <property type="evidence" value="ECO:0000318"/>
    <property type="project" value="GO_Central"/>
</dbReference>
<dbReference type="GO" id="GO:0005524">
    <property type="term" value="F:ATP binding"/>
    <property type="evidence" value="ECO:0007669"/>
    <property type="project" value="UniProtKB-KW"/>
</dbReference>
<dbReference type="GO" id="GO:0004672">
    <property type="term" value="F:protein kinase activity"/>
    <property type="evidence" value="ECO:0000314"/>
    <property type="project" value="UniProtKB"/>
</dbReference>
<dbReference type="GO" id="GO:0004713">
    <property type="term" value="F:protein tyrosine kinase activity"/>
    <property type="evidence" value="ECO:0000269"/>
    <property type="project" value="Reactome"/>
</dbReference>
<dbReference type="GO" id="GO:0030298">
    <property type="term" value="F:receptor signaling protein tyrosine kinase activator activity"/>
    <property type="evidence" value="ECO:0000314"/>
    <property type="project" value="UniProtKB"/>
</dbReference>
<dbReference type="GO" id="GO:0004714">
    <property type="term" value="F:transmembrane receptor protein tyrosine kinase activity"/>
    <property type="evidence" value="ECO:0000314"/>
    <property type="project" value="UniProt"/>
</dbReference>
<dbReference type="GO" id="GO:0008283">
    <property type="term" value="P:cell population proliferation"/>
    <property type="evidence" value="ECO:0000314"/>
    <property type="project" value="UniProtKB"/>
</dbReference>
<dbReference type="GO" id="GO:0007169">
    <property type="term" value="P:cell surface receptor protein tyrosine kinase signaling pathway"/>
    <property type="evidence" value="ECO:0000314"/>
    <property type="project" value="UniProt"/>
</dbReference>
<dbReference type="GO" id="GO:0071300">
    <property type="term" value="P:cellular response to retinoic acid"/>
    <property type="evidence" value="ECO:0000315"/>
    <property type="project" value="BHF-UCL"/>
</dbReference>
<dbReference type="GO" id="GO:0043066">
    <property type="term" value="P:negative regulation of apoptotic process"/>
    <property type="evidence" value="ECO:0000315"/>
    <property type="project" value="UniProtKB"/>
</dbReference>
<dbReference type="GO" id="GO:0038083">
    <property type="term" value="P:peptidyl-tyrosine autophosphorylation"/>
    <property type="evidence" value="ECO:0000314"/>
    <property type="project" value="UniProtKB"/>
</dbReference>
<dbReference type="GO" id="GO:0010666">
    <property type="term" value="P:positive regulation of cardiac muscle cell apoptotic process"/>
    <property type="evidence" value="ECO:0000314"/>
    <property type="project" value="UniProtKB"/>
</dbReference>
<dbReference type="GO" id="GO:0010976">
    <property type="term" value="P:positive regulation of neuron projection development"/>
    <property type="evidence" value="ECO:0000315"/>
    <property type="project" value="BHF-UCL"/>
</dbReference>
<dbReference type="GO" id="GO:0051897">
    <property type="term" value="P:positive regulation of phosphatidylinositol 3-kinase/protein kinase B signal transduction"/>
    <property type="evidence" value="ECO:0000315"/>
    <property type="project" value="UniProtKB"/>
</dbReference>
<dbReference type="GO" id="GO:0006468">
    <property type="term" value="P:protein phosphorylation"/>
    <property type="evidence" value="ECO:0000304"/>
    <property type="project" value="ProtInc"/>
</dbReference>
<dbReference type="GO" id="GO:0042127">
    <property type="term" value="P:regulation of cell population proliferation"/>
    <property type="evidence" value="ECO:0000318"/>
    <property type="project" value="GO_Central"/>
</dbReference>
<dbReference type="GO" id="GO:0045664">
    <property type="term" value="P:regulation of neuron differentiation"/>
    <property type="evidence" value="ECO:0000318"/>
    <property type="project" value="GO_Central"/>
</dbReference>
<dbReference type="GO" id="GO:0007165">
    <property type="term" value="P:signal transduction"/>
    <property type="evidence" value="ECO:0000304"/>
    <property type="project" value="ProtInc"/>
</dbReference>
<dbReference type="CDD" id="cd05036">
    <property type="entry name" value="PTKc_ALK_LTK"/>
    <property type="match status" value="1"/>
</dbReference>
<dbReference type="FunFam" id="1.10.510.10:FF:000113">
    <property type="entry name" value="Tyrosine-protein kinase receptor"/>
    <property type="match status" value="1"/>
</dbReference>
<dbReference type="FunFam" id="3.30.200.20:FF:000117">
    <property type="entry name" value="Tyrosine-protein kinase receptor"/>
    <property type="match status" value="1"/>
</dbReference>
<dbReference type="Gene3D" id="3.30.200.20">
    <property type="entry name" value="Phosphorylase Kinase, domain 1"/>
    <property type="match status" value="1"/>
</dbReference>
<dbReference type="Gene3D" id="1.10.510.10">
    <property type="entry name" value="Transferase(Phosphotransferase) domain 1"/>
    <property type="match status" value="1"/>
</dbReference>
<dbReference type="InterPro" id="IPR055163">
    <property type="entry name" value="ALK/LTK-like_GRD"/>
</dbReference>
<dbReference type="InterPro" id="IPR011009">
    <property type="entry name" value="Kinase-like_dom_sf"/>
</dbReference>
<dbReference type="InterPro" id="IPR000719">
    <property type="entry name" value="Prot_kinase_dom"/>
</dbReference>
<dbReference type="InterPro" id="IPR017441">
    <property type="entry name" value="Protein_kinase_ATP_BS"/>
</dbReference>
<dbReference type="InterPro" id="IPR050122">
    <property type="entry name" value="RTK"/>
</dbReference>
<dbReference type="InterPro" id="IPR001245">
    <property type="entry name" value="Ser-Thr/Tyr_kinase_cat_dom"/>
</dbReference>
<dbReference type="InterPro" id="IPR008266">
    <property type="entry name" value="Tyr_kinase_AS"/>
</dbReference>
<dbReference type="InterPro" id="IPR020635">
    <property type="entry name" value="Tyr_kinase_cat_dom"/>
</dbReference>
<dbReference type="InterPro" id="IPR002011">
    <property type="entry name" value="Tyr_kinase_rcpt_2_CS"/>
</dbReference>
<dbReference type="PANTHER" id="PTHR24416:SF294">
    <property type="entry name" value="LEUKOCYTE TYROSINE KINASE RECEPTOR"/>
    <property type="match status" value="1"/>
</dbReference>
<dbReference type="PANTHER" id="PTHR24416">
    <property type="entry name" value="TYROSINE-PROTEIN KINASE RECEPTOR"/>
    <property type="match status" value="1"/>
</dbReference>
<dbReference type="Pfam" id="PF12810">
    <property type="entry name" value="ALK_LTK_GRD"/>
    <property type="match status" value="1"/>
</dbReference>
<dbReference type="Pfam" id="PF07714">
    <property type="entry name" value="PK_Tyr_Ser-Thr"/>
    <property type="match status" value="1"/>
</dbReference>
<dbReference type="PRINTS" id="PR00109">
    <property type="entry name" value="TYRKINASE"/>
</dbReference>
<dbReference type="SMART" id="SM00219">
    <property type="entry name" value="TyrKc"/>
    <property type="match status" value="1"/>
</dbReference>
<dbReference type="SUPFAM" id="SSF56112">
    <property type="entry name" value="Protein kinase-like (PK-like)"/>
    <property type="match status" value="1"/>
</dbReference>
<dbReference type="PROSITE" id="PS00107">
    <property type="entry name" value="PROTEIN_KINASE_ATP"/>
    <property type="match status" value="1"/>
</dbReference>
<dbReference type="PROSITE" id="PS50011">
    <property type="entry name" value="PROTEIN_KINASE_DOM"/>
    <property type="match status" value="1"/>
</dbReference>
<dbReference type="PROSITE" id="PS00109">
    <property type="entry name" value="PROTEIN_KINASE_TYR"/>
    <property type="match status" value="1"/>
</dbReference>
<dbReference type="PROSITE" id="PS00239">
    <property type="entry name" value="RECEPTOR_TYR_KIN_II"/>
    <property type="match status" value="1"/>
</dbReference>